<gene>
    <name type="primary">marveld1</name>
</gene>
<accession>Q6GPN9</accession>
<comment type="subcellular location">
    <subcellularLocation>
        <location evidence="4">Membrane</location>
        <topology evidence="4">Multi-pass membrane protein</topology>
    </subcellularLocation>
    <subcellularLocation>
        <location evidence="1">Nucleus</location>
    </subcellularLocation>
</comment>
<evidence type="ECO:0000250" key="1"/>
<evidence type="ECO:0000255" key="2"/>
<evidence type="ECO:0000255" key="3">
    <source>
        <dbReference type="PROSITE-ProRule" id="PRU00581"/>
    </source>
</evidence>
<evidence type="ECO:0000305" key="4"/>
<feature type="chain" id="PRO_0000271525" description="MARVEL domain-containing protein 1">
    <location>
        <begin position="1"/>
        <end position="170"/>
    </location>
</feature>
<feature type="topological domain" description="Cytoplasmic" evidence="2">
    <location>
        <begin position="1"/>
        <end position="38"/>
    </location>
</feature>
<feature type="transmembrane region" description="Helical" evidence="2">
    <location>
        <begin position="39"/>
        <end position="59"/>
    </location>
</feature>
<feature type="topological domain" description="Extracellular" evidence="2">
    <location>
        <begin position="60"/>
        <end position="67"/>
    </location>
</feature>
<feature type="transmembrane region" description="Helical" evidence="2">
    <location>
        <begin position="68"/>
        <end position="88"/>
    </location>
</feature>
<feature type="topological domain" description="Cytoplasmic" evidence="2">
    <location>
        <begin position="89"/>
        <end position="102"/>
    </location>
</feature>
<feature type="transmembrane region" description="Helical" evidence="2">
    <location>
        <begin position="103"/>
        <end position="123"/>
    </location>
</feature>
<feature type="topological domain" description="Extracellular" evidence="2">
    <location>
        <begin position="124"/>
        <end position="145"/>
    </location>
</feature>
<feature type="transmembrane region" description="Helical" evidence="2">
    <location>
        <begin position="146"/>
        <end position="166"/>
    </location>
</feature>
<feature type="topological domain" description="Cytoplasmic" evidence="2">
    <location>
        <begin position="167"/>
        <end position="170"/>
    </location>
</feature>
<feature type="domain" description="MARVEL" evidence="3">
    <location>
        <begin position="34"/>
        <end position="167"/>
    </location>
</feature>
<protein>
    <recommendedName>
        <fullName>MARVEL domain-containing protein 1</fullName>
    </recommendedName>
</protein>
<proteinExistence type="evidence at transcript level"/>
<reference key="1">
    <citation type="submission" date="2004-06" db="EMBL/GenBank/DDBJ databases">
        <authorList>
            <consortium name="NIH - Xenopus Gene Collection (XGC) project"/>
        </authorList>
    </citation>
    <scope>NUCLEOTIDE SEQUENCE [LARGE SCALE MRNA]</scope>
    <source>
        <tissue>Embryo</tissue>
    </source>
</reference>
<keyword id="KW-0472">Membrane</keyword>
<keyword id="KW-0539">Nucleus</keyword>
<keyword id="KW-1185">Reference proteome</keyword>
<keyword id="KW-0812">Transmembrane</keyword>
<keyword id="KW-1133">Transmembrane helix</keyword>
<sequence>MEGERPRSDTVTTTVSSHMETISLGGSIAYDRSFLRSPTGVLLLMEIMFGLLVWALIAGSEYFLFSAFGWVMFVAVFYWVLSVFFFLLHLTRANTRITKVPWSLVGLCFNGSAFVLYLIAAVVEASSVNKDVHQHHNYNSWTASSFFAFIVTVCYALSTYFSFQAWRTKS</sequence>
<dbReference type="EMBL" id="BC073074">
    <property type="protein sequence ID" value="AAH73074.1"/>
    <property type="molecule type" value="mRNA"/>
</dbReference>
<dbReference type="RefSeq" id="NP_001085644.1">
    <property type="nucleotide sequence ID" value="NM_001092175.1"/>
</dbReference>
<dbReference type="SMR" id="Q6GPN9"/>
<dbReference type="DNASU" id="444070"/>
<dbReference type="AGR" id="Xenbase:XB-GENE-6256247"/>
<dbReference type="Xenbase" id="XB-GENE-6256247">
    <property type="gene designation" value="cmtm8.L"/>
</dbReference>
<dbReference type="Proteomes" id="UP000186698">
    <property type="component" value="Unplaced"/>
</dbReference>
<dbReference type="Bgee" id="444070">
    <property type="expression patterns" value="Expressed in lung and 12 other cell types or tissues"/>
</dbReference>
<dbReference type="GO" id="GO:0016020">
    <property type="term" value="C:membrane"/>
    <property type="evidence" value="ECO:0000318"/>
    <property type="project" value="GO_Central"/>
</dbReference>
<dbReference type="GO" id="GO:0005634">
    <property type="term" value="C:nucleus"/>
    <property type="evidence" value="ECO:0007669"/>
    <property type="project" value="UniProtKB-SubCell"/>
</dbReference>
<dbReference type="GO" id="GO:0019911">
    <property type="term" value="F:structural constituent of myelin sheath"/>
    <property type="evidence" value="ECO:0000318"/>
    <property type="project" value="GO_Central"/>
</dbReference>
<dbReference type="GO" id="GO:0042552">
    <property type="term" value="P:myelination"/>
    <property type="evidence" value="ECO:0000318"/>
    <property type="project" value="GO_Central"/>
</dbReference>
<dbReference type="InterPro" id="IPR013295">
    <property type="entry name" value="MAL"/>
</dbReference>
<dbReference type="InterPro" id="IPR008253">
    <property type="entry name" value="Marvel"/>
</dbReference>
<dbReference type="InterPro" id="IPR050578">
    <property type="entry name" value="MARVEL-CKLF_proteins"/>
</dbReference>
<dbReference type="PANTHER" id="PTHR22776:SF10">
    <property type="entry name" value="CKLF-LIKE MARVEL TRANSMEMBRANE DOMAIN-CONTAINING PROTEIN 8"/>
    <property type="match status" value="1"/>
</dbReference>
<dbReference type="PANTHER" id="PTHR22776">
    <property type="entry name" value="MARVEL-CONTAINING POTENTIAL LIPID RAFT-ASSOCIATED PROTEIN"/>
    <property type="match status" value="1"/>
</dbReference>
<dbReference type="Pfam" id="PF01284">
    <property type="entry name" value="MARVEL"/>
    <property type="match status" value="1"/>
</dbReference>
<dbReference type="PRINTS" id="PR01884">
    <property type="entry name" value="MALPROTEIN"/>
</dbReference>
<dbReference type="PROSITE" id="PS51225">
    <property type="entry name" value="MARVEL"/>
    <property type="match status" value="1"/>
</dbReference>
<organism>
    <name type="scientific">Xenopus laevis</name>
    <name type="common">African clawed frog</name>
    <dbReference type="NCBI Taxonomy" id="8355"/>
    <lineage>
        <taxon>Eukaryota</taxon>
        <taxon>Metazoa</taxon>
        <taxon>Chordata</taxon>
        <taxon>Craniata</taxon>
        <taxon>Vertebrata</taxon>
        <taxon>Euteleostomi</taxon>
        <taxon>Amphibia</taxon>
        <taxon>Batrachia</taxon>
        <taxon>Anura</taxon>
        <taxon>Pipoidea</taxon>
        <taxon>Pipidae</taxon>
        <taxon>Xenopodinae</taxon>
        <taxon>Xenopus</taxon>
        <taxon>Xenopus</taxon>
    </lineage>
</organism>
<name>MALD1_XENLA</name>